<comment type="function">
    <text evidence="9 10 11">Receptor for VEGF or VEGFC. Has a tyrosine-protein kinase activity. Combinations of multiple VEGF receptors are required for development of different blood vessel types in the embryo. Involved in angiogenesis, specifically in VEGF-induced sprouting of new blood vessels. Particularly involved in artery formation. Does not appear to be required for hematopoiesis.</text>
</comment>
<comment type="catalytic activity">
    <reaction evidence="6 10">
        <text>L-tyrosyl-[protein] + ATP = O-phospho-L-tyrosyl-[protein] + ADP + H(+)</text>
        <dbReference type="Rhea" id="RHEA:10596"/>
        <dbReference type="Rhea" id="RHEA-COMP:10136"/>
        <dbReference type="Rhea" id="RHEA-COMP:20101"/>
        <dbReference type="ChEBI" id="CHEBI:15378"/>
        <dbReference type="ChEBI" id="CHEBI:30616"/>
        <dbReference type="ChEBI" id="CHEBI:46858"/>
        <dbReference type="ChEBI" id="CHEBI:61978"/>
        <dbReference type="ChEBI" id="CHEBI:456216"/>
        <dbReference type="EC" id="2.7.10.1"/>
    </reaction>
</comment>
<comment type="subunit">
    <text evidence="11">Interacts with isoform VEGF165 of vegfaa and isoform VEGF171 of vegfab.</text>
</comment>
<comment type="interaction">
    <interactant intactId="EBI-2267980">
        <id>Q8AXB3</id>
    </interactant>
    <interactant intactId="EBI-2268253">
        <id>A4JYN2</id>
        <label>bcan</label>
    </interactant>
    <organismsDiffer>false</organismsDiffer>
    <experiments>2</experiments>
</comment>
<comment type="interaction">
    <interactant intactId="EBI-2267980">
        <id>Q8AXB3</id>
    </interactant>
    <interactant intactId="EBI-2268159">
        <id>Q8UVD6</id>
        <label>boc</label>
    </interactant>
    <organismsDiffer>false</organismsDiffer>
    <experiments>2</experiments>
</comment>
<comment type="interaction">
    <interactant intactId="EBI-2267980">
        <id>Q8AXB3</id>
    </interactant>
    <interactant intactId="EBI-42471163">
        <id>A0A8M1P5N0</id>
        <label>epyc</label>
    </interactant>
    <organismsDiffer>false</organismsDiffer>
    <experiments>2</experiments>
</comment>
<comment type="interaction">
    <interactant intactId="EBI-2267980">
        <id>Q8AXB3</id>
    </interactant>
    <interactant intactId="EBI-10834257">
        <id>A4QN31</id>
        <label>fgfr2</label>
    </interactant>
    <organismsDiffer>false</organismsDiffer>
    <experiments>2</experiments>
</comment>
<comment type="interaction">
    <interactant intactId="EBI-2267980">
        <id>Q8AXB3</id>
    </interactant>
    <interactant intactId="EBI-42471260">
        <id>A0A8M9Q9W6</id>
        <label>fgfr3</label>
    </interactant>
    <organismsDiffer>false</organismsDiffer>
    <experiments>2</experiments>
</comment>
<comment type="interaction">
    <interactant intactId="EBI-2267980">
        <id>Q8AXB3</id>
    </interactant>
    <interactant intactId="EBI-1579483">
        <id>Q6NW92</id>
        <label>igfbp7</label>
    </interactant>
    <organismsDiffer>false</organismsDiffer>
    <experiments>2</experiments>
</comment>
<comment type="interaction">
    <interactant intactId="EBI-2267980">
        <id>Q8AXB3</id>
    </interactant>
    <interactant intactId="EBI-2462996">
        <id>B8JKM0</id>
        <label>lrrtm1</label>
    </interactant>
    <organismsDiffer>false</organismsDiffer>
    <experiments>2</experiments>
</comment>
<comment type="interaction">
    <interactant intactId="EBI-2267980">
        <id>Q8AXB3</id>
    </interactant>
    <interactant intactId="EBI-42470324">
        <id>A0A8M3B365</id>
        <label>lrrtm4l1</label>
    </interactant>
    <organismsDiffer>false</organismsDiffer>
    <experiments>2</experiments>
</comment>
<comment type="interaction">
    <interactant intactId="EBI-2267980">
        <id>Q8AXB3</id>
    </interactant>
    <interactant intactId="EBI-42471141">
        <id>Q15JE7</id>
        <label>optc</label>
    </interactant>
    <organismsDiffer>false</organismsDiffer>
    <experiments>2</experiments>
</comment>
<comment type="interaction">
    <interactant intactId="EBI-2267980">
        <id>Q8AXB3</id>
    </interactant>
    <interactant intactId="EBI-42470033">
        <id>F1QHI8</id>
        <label>pdgfrl</label>
    </interactant>
    <organismsDiffer>false</organismsDiffer>
    <experiments>2</experiments>
</comment>
<comment type="interaction">
    <interactant intactId="EBI-2267980">
        <id>Q8AXB3</id>
    </interactant>
    <interactant intactId="EBI-42471039">
        <id>A8DZ85</id>
        <label>robo3</label>
    </interactant>
    <organismsDiffer>false</organismsDiffer>
    <experiments>4</experiments>
</comment>
<comment type="interaction">
    <interactant intactId="EBI-2267980">
        <id>Q8AXB3</id>
    </interactant>
    <interactant intactId="EBI-42471179">
        <id>A0A8M9Q8Q6</id>
        <label>vstm4b</label>
    </interactant>
    <organismsDiffer>false</organismsDiffer>
    <experiments>2</experiments>
</comment>
<comment type="subcellular location">
    <subcellularLocation>
        <location evidence="18">Cell membrane</location>
        <topology evidence="18">Single-pass type I membrane protein</topology>
    </subcellularLocation>
</comment>
<comment type="tissue specificity">
    <text evidence="11 12 13 14 15">First expressed in embryos between 5- and 7-somites. At 7 somites, expressed in discrete bilateral stripes both anteriorly and posteriorly, and in a transverse ectodermal stripe in the hindbrain. From 7-somites, expression seems to extend caudally from the head, and in both directions in the trunk region, until by 20-somites, expression is detected as a continuous band from the anterior head region to the tailbud. Concurrently, cells expressing kdrl in the mid- and posterior trunk regions converge medially. By 24 hours post-fertilization (hpf), expressed in all the endothelial cells lining the vasculature.</text>
</comment>
<comment type="PTM">
    <text evidence="11">Phosphorylated and activated by vegfaa and vegfab.</text>
</comment>
<comment type="similarity">
    <text evidence="5">Belongs to the protein kinase superfamily. Tyr protein kinase family. CSF-1/PDGF receptor subfamily.</text>
</comment>
<comment type="caution">
    <text evidence="18">Was originally thought to be an ortholog of KDR, but PubMed:18516225 has shown that it represents a fourth vertebrate vascular endothelial growth factor receptor (VEGFR) that is not present in eutherian mammals (marsupials and placental mammals).</text>
</comment>
<reference evidence="20" key="1">
    <citation type="journal article" date="2002" name="Cancer Cell">
        <title>Dissection of angiogenic signaling in zebrafish using a chemical genetic approach.</title>
        <authorList>
            <person name="Chan J."/>
            <person name="Bayliss P.E."/>
            <person name="Wood J.M."/>
            <person name="Roberts T.M."/>
        </authorList>
    </citation>
    <scope>NUCLEOTIDE SEQUENCE [MRNA]</scope>
    <source>
        <tissue evidence="8">Embryo</tissue>
    </source>
</reference>
<reference evidence="18" key="2">
    <citation type="journal article" date="2002" name="Curr. Biol.">
        <title>Analysis of a zebrafish VEGF receptor mutant reveals specific disruption of angiogenesis.</title>
        <authorList>
            <person name="Habeck H."/>
            <person name="Odenthal J."/>
            <person name="Walderich B."/>
            <person name="Maischein H.-M."/>
            <person name="Schulte-Merker S."/>
        </authorList>
    </citation>
    <scope>NUCLEOTIDE SEQUENCE [MRNA]</scope>
    <scope>FUNCTION</scope>
</reference>
<reference key="3">
    <citation type="journal article" date="2008" name="Genome Res.">
        <title>Large-scale screening for novel low-affinity extracellular protein interactions.</title>
        <authorList>
            <person name="Bushell K.M."/>
            <person name="Soellner C."/>
            <person name="Schuster-Boeckler B."/>
            <person name="Bateman A."/>
            <person name="Wright G.J."/>
        </authorList>
    </citation>
    <scope>NUCLEOTIDE SEQUENCE [LARGE SCALE MRNA]</scope>
</reference>
<reference key="4">
    <citation type="journal article" date="2013" name="Nature">
        <title>The zebrafish reference genome sequence and its relationship to the human genome.</title>
        <authorList>
            <person name="Howe K."/>
            <person name="Clark M.D."/>
            <person name="Torroja C.F."/>
            <person name="Torrance J."/>
            <person name="Berthelot C."/>
            <person name="Muffato M."/>
            <person name="Collins J.E."/>
            <person name="Humphray S."/>
            <person name="McLaren K."/>
            <person name="Matthews L."/>
            <person name="McLaren S."/>
            <person name="Sealy I."/>
            <person name="Caccamo M."/>
            <person name="Churcher C."/>
            <person name="Scott C."/>
            <person name="Barrett J.C."/>
            <person name="Koch R."/>
            <person name="Rauch G.J."/>
            <person name="White S."/>
            <person name="Chow W."/>
            <person name="Kilian B."/>
            <person name="Quintais L.T."/>
            <person name="Guerra-Assuncao J.A."/>
            <person name="Zhou Y."/>
            <person name="Gu Y."/>
            <person name="Yen J."/>
            <person name="Vogel J.H."/>
            <person name="Eyre T."/>
            <person name="Redmond S."/>
            <person name="Banerjee R."/>
            <person name="Chi J."/>
            <person name="Fu B."/>
            <person name="Langley E."/>
            <person name="Maguire S.F."/>
            <person name="Laird G.K."/>
            <person name="Lloyd D."/>
            <person name="Kenyon E."/>
            <person name="Donaldson S."/>
            <person name="Sehra H."/>
            <person name="Almeida-King J."/>
            <person name="Loveland J."/>
            <person name="Trevanion S."/>
            <person name="Jones M."/>
            <person name="Quail M."/>
            <person name="Willey D."/>
            <person name="Hunt A."/>
            <person name="Burton J."/>
            <person name="Sims S."/>
            <person name="McLay K."/>
            <person name="Plumb B."/>
            <person name="Davis J."/>
            <person name="Clee C."/>
            <person name="Oliver K."/>
            <person name="Clark R."/>
            <person name="Riddle C."/>
            <person name="Elliot D."/>
            <person name="Threadgold G."/>
            <person name="Harden G."/>
            <person name="Ware D."/>
            <person name="Begum S."/>
            <person name="Mortimore B."/>
            <person name="Kerry G."/>
            <person name="Heath P."/>
            <person name="Phillimore B."/>
            <person name="Tracey A."/>
            <person name="Corby N."/>
            <person name="Dunn M."/>
            <person name="Johnson C."/>
            <person name="Wood J."/>
            <person name="Clark S."/>
            <person name="Pelan S."/>
            <person name="Griffiths G."/>
            <person name="Smith M."/>
            <person name="Glithero R."/>
            <person name="Howden P."/>
            <person name="Barker N."/>
            <person name="Lloyd C."/>
            <person name="Stevens C."/>
            <person name="Harley J."/>
            <person name="Holt K."/>
            <person name="Panagiotidis G."/>
            <person name="Lovell J."/>
            <person name="Beasley H."/>
            <person name="Henderson C."/>
            <person name="Gordon D."/>
            <person name="Auger K."/>
            <person name="Wright D."/>
            <person name="Collins J."/>
            <person name="Raisen C."/>
            <person name="Dyer L."/>
            <person name="Leung K."/>
            <person name="Robertson L."/>
            <person name="Ambridge K."/>
            <person name="Leongamornlert D."/>
            <person name="McGuire S."/>
            <person name="Gilderthorp R."/>
            <person name="Griffiths C."/>
            <person name="Manthravadi D."/>
            <person name="Nichol S."/>
            <person name="Barker G."/>
            <person name="Whitehead S."/>
            <person name="Kay M."/>
            <person name="Brown J."/>
            <person name="Murnane C."/>
            <person name="Gray E."/>
            <person name="Humphries M."/>
            <person name="Sycamore N."/>
            <person name="Barker D."/>
            <person name="Saunders D."/>
            <person name="Wallis J."/>
            <person name="Babbage A."/>
            <person name="Hammond S."/>
            <person name="Mashreghi-Mohammadi M."/>
            <person name="Barr L."/>
            <person name="Martin S."/>
            <person name="Wray P."/>
            <person name="Ellington A."/>
            <person name="Matthews N."/>
            <person name="Ellwood M."/>
            <person name="Woodmansey R."/>
            <person name="Clark G."/>
            <person name="Cooper J."/>
            <person name="Tromans A."/>
            <person name="Grafham D."/>
            <person name="Skuce C."/>
            <person name="Pandian R."/>
            <person name="Andrews R."/>
            <person name="Harrison E."/>
            <person name="Kimberley A."/>
            <person name="Garnett J."/>
            <person name="Fosker N."/>
            <person name="Hall R."/>
            <person name="Garner P."/>
            <person name="Kelly D."/>
            <person name="Bird C."/>
            <person name="Palmer S."/>
            <person name="Gehring I."/>
            <person name="Berger A."/>
            <person name="Dooley C.M."/>
            <person name="Ersan-Urun Z."/>
            <person name="Eser C."/>
            <person name="Geiger H."/>
            <person name="Geisler M."/>
            <person name="Karotki L."/>
            <person name="Kirn A."/>
            <person name="Konantz J."/>
            <person name="Konantz M."/>
            <person name="Oberlander M."/>
            <person name="Rudolph-Geiger S."/>
            <person name="Teucke M."/>
            <person name="Lanz C."/>
            <person name="Raddatz G."/>
            <person name="Osoegawa K."/>
            <person name="Zhu B."/>
            <person name="Rapp A."/>
            <person name="Widaa S."/>
            <person name="Langford C."/>
            <person name="Yang F."/>
            <person name="Schuster S.C."/>
            <person name="Carter N.P."/>
            <person name="Harrow J."/>
            <person name="Ning Z."/>
            <person name="Herrero J."/>
            <person name="Searle S.M."/>
            <person name="Enright A."/>
            <person name="Geisler R."/>
            <person name="Plasterk R.H."/>
            <person name="Lee C."/>
            <person name="Westerfield M."/>
            <person name="de Jong P.J."/>
            <person name="Zon L.I."/>
            <person name="Postlethwait J.H."/>
            <person name="Nusslein-Volhard C."/>
            <person name="Hubbard T.J."/>
            <person name="Roest Crollius H."/>
            <person name="Rogers J."/>
            <person name="Stemple D.L."/>
        </authorList>
    </citation>
    <scope>NUCLEOTIDE SEQUENCE [LARGE SCALE GENOMIC DNA]</scope>
    <source>
        <strain>Tuebingen</strain>
    </source>
</reference>
<reference key="5">
    <citation type="submission" date="2006-12" db="EMBL/GenBank/DDBJ databases">
        <authorList>
            <consortium name="NIH - Zebrafish Gene Collection (ZGC) project"/>
        </authorList>
    </citation>
    <scope>NUCLEOTIDE SEQUENCE [LARGE SCALE MRNA]</scope>
    <source>
        <tissue>Kidney</tissue>
    </source>
</reference>
<reference evidence="18" key="6">
    <citation type="journal article" date="1998" name="Dev. Biol.">
        <title>The cloche and spadetail genes differentially affect hematopoiesis and vasculogenesis.</title>
        <authorList>
            <person name="Thompson M.A."/>
            <person name="Ransom D.G."/>
            <person name="Pratt S.J."/>
            <person name="MacLennan H."/>
            <person name="Kieran M.W."/>
            <person name="Detrich H.W. III"/>
            <person name="Vail B."/>
            <person name="Huber T.L."/>
            <person name="Paw B."/>
            <person name="Brownlie A.J."/>
            <person name="Oates A.C."/>
            <person name="Fritz A."/>
            <person name="Gates M.A."/>
            <person name="Amores A."/>
            <person name="Bahary N."/>
            <person name="Talbot W.S."/>
            <person name="Her H."/>
            <person name="Beier D.R."/>
            <person name="Postlethwait J.H."/>
            <person name="Zon L.I."/>
        </authorList>
    </citation>
    <scope>NUCLEOTIDE SEQUENCE [MRNA] OF 131-1302</scope>
    <source>
        <tissue evidence="16">Kidney</tissue>
    </source>
</reference>
<reference evidence="18" key="7">
    <citation type="journal article" date="1997" name="Mech. Dev.">
        <title>A role for notochord in axial vascular development revealed by analysis of phenotype and the expression of VEGR-2 in zebrafish flh and ntl mutant embryos.</title>
        <authorList>
            <person name="Sumoy L."/>
            <person name="Keasey J.B."/>
            <person name="Dittman T.D."/>
            <person name="Kimelman D."/>
        </authorList>
    </citation>
    <scope>NUCLEOTIDE SEQUENCE [MRNA] OF 859-1145</scope>
    <scope>TISSUE SPECIFICITY</scope>
    <source>
        <tissue evidence="15">Brain</tissue>
    </source>
</reference>
<reference evidence="18" key="8">
    <citation type="journal article" date="1997" name="Dev. Biol.">
        <title>Vessel patterning in the embryo of the zebrafish: guidance by notochord.</title>
        <authorList>
            <person name="Fouquet B."/>
            <person name="Weinstein B.M."/>
            <person name="Serluca F.C."/>
            <person name="Fishman M.C."/>
        </authorList>
    </citation>
    <scope>NUCLEOTIDE SEQUENCE [MRNA] OF 960-1302</scope>
    <scope>TISSUE SPECIFICITY</scope>
    <source>
        <tissue evidence="14">Embryo</tissue>
    </source>
</reference>
<reference evidence="18" key="9">
    <citation type="journal article" date="1997" name="Development">
        <title>The zebrafish gene cloche acts upstream of a flk-1 homologue to regulate endothelial cell differentiation.</title>
        <authorList>
            <person name="Liao W."/>
            <person name="Bisgrove B.W."/>
            <person name="Sawyer H."/>
            <person name="Hug B."/>
            <person name="Bell B."/>
            <person name="Peters K."/>
            <person name="Grunwald D.J."/>
            <person name="Stainier D.Y.R."/>
        </authorList>
    </citation>
    <scope>NUCLEOTIDE SEQUENCE [MRNA] OF 978-1302</scope>
    <scope>TISSUE SPECIFICITY</scope>
    <source>
        <tissue evidence="13">Embryo</tissue>
    </source>
</reference>
<reference key="10">
    <citation type="journal article" date="2006" name="Proc. Natl. Acad. Sci. U.S.A.">
        <title>Distinct genetic interactions between multiple Vegf receptors are required for development of different blood vessel types in zebrafish.</title>
        <authorList>
            <person name="Covassin L.D."/>
            <person name="Villefranc J.A."/>
            <person name="Kacergis M.C."/>
            <person name="Weinstein B.M."/>
            <person name="Lawson N.D."/>
        </authorList>
    </citation>
    <scope>FUNCTION</scope>
    <scope>CATALYTIC ACTIVITY</scope>
    <scope>MUTAGENESIS OF LEU-845</scope>
</reference>
<reference key="11">
    <citation type="journal article" date="2007" name="Blood">
        <title>Duplicate VegfA genes and orthologues of the KDR receptor tyrosine kinase family mediate vascular development in the zebrafish.</title>
        <authorList>
            <person name="Bahary N."/>
            <person name="Goishi K."/>
            <person name="Stuckenholz C."/>
            <person name="Weber G."/>
            <person name="Leblanc J."/>
            <person name="Schafer C.A."/>
            <person name="Berman S.S."/>
            <person name="Klagsbrun M."/>
            <person name="Zon L.I."/>
        </authorList>
    </citation>
    <scope>FUNCTION</scope>
    <scope>INTERACTION WITH VEGFAA AND VEGFAB</scope>
    <scope>TISSUE SPECIFICITY</scope>
    <scope>PHOSPHORYLATION</scope>
</reference>
<reference key="12">
    <citation type="journal article" date="2007" name="PLoS Genet.">
        <title>Early endocardial morphogenesis requires Scl/Tal1.</title>
        <authorList>
            <person name="Bussmann J."/>
            <person name="Bakkers J."/>
            <person name="Schulte-Merker S."/>
        </authorList>
    </citation>
    <scope>TISSUE SPECIFICITY</scope>
    <scope>ORTHOLOGY</scope>
</reference>
<reference key="13">
    <citation type="journal article" date="2008" name="PLoS Genet.">
        <title>Zebrafish VEGF receptors: a guideline to nomenclature.</title>
        <authorList>
            <person name="Bussmann J."/>
            <person name="Lawson N."/>
            <person name="Zon L."/>
            <person name="Schulte-Merker S."/>
        </authorList>
    </citation>
    <scope>NOMENCLATURE AND ORTHOLOGY</scope>
</reference>
<gene>
    <name type="primary">kdrl</name>
    <name evidence="19" type="synonym">flk</name>
    <name type="synonym">flk-1</name>
    <name evidence="17" type="synonym">flk1</name>
    <name type="synonym">flka</name>
    <name type="synonym">kdr</name>
    <name type="synonym">kdra</name>
    <name type="synonym">vegfr2</name>
    <name type="synonym">vegfr4</name>
    <name type="synonym">vegr2</name>
    <name type="ORF">si:ch211-276g21.4</name>
</gene>
<sequence length="1302" mass="146950">MTPLKTSVKAFFTLHVLFSCISHGLVEGSRLPDPQLLPDGDTHLQHVGGTLTLICRGSTALHWRLASRNVSSVRIESCEERLHKHCSKLVIHNLRHNDTGIYSCSHKKSSDHEVSTYVFVKDPHHPFVEAYSLPHPLFAYRNDPYFVVPCRTTYPNQNVILETQMNPMADDVKRGVQWDPKKGFTVPLKPYDSYHLITCLTRVDNAEFSSVYLLKRLTMEIKNLAIEPERPRVLVGDTLILNCSAETTYNGRIHFEWEFHKERINRTHHFSTTPVQLAQIMVMSKALIVPNVTMEDKGTYTCTGSIEFKKLQMSTKVIVYEHPFLNVTHNKRKFTSTVEGRRVQFEPRVNAVPAPDRVLWYKDGVAISENSTCYETAGYNLTIKQVRQKDAGIFTIALSNQERGLYRNISYKLEVRVKPKIFEEDVAPAGPQTFRYDQRHKLTCTAFGIPMPNITWFWQPCDPSANLTECKLYTDPLPIENVDDHFPQNPIKDVNSKVGLLKSKNRTISTLVVKTANVSGVYSCTARNELGNRTMRIPFYVDDHPQPFEIEPSTAVAGDDITLTCRGTRYLYDRLTWYDPLGHKVPKDETTLRIEPYTISLSIKLPNVSRNHTLGYECQALKINTNKVVNVTSALTIDERQGPWLMQNLTNQDVNSSSTLTLACLAYGVPAPFITWYKDKTPVTEGPGITLKDDGTLIIERVKKDDEGIYECRASNDGGEAKTSAVITVVGEDGKPNIEVIILVSTGAAATFLWIMLILFIRKLRKPSSADLKTGYLSIIMDPEQMPLDEQCDRLPYDSNKWEFPQDRLRLGKTLGHGAFGKVVEASAFGIDKISTCKTVAVKMLKVGATNNEWRALMSELKILIHIGHHLNVVNLLGACTKRGGPLMIIVEFCKYGNLSNYLRSKRGDFVVYKSQDGKAVRSSSGCDLSELIKRRLESVASTGSSASSGFIEDKSYCDSEEEEEEQEDLYKKVLTLEDLICYSFQVAKGMEFLASRKCIHRDLAARNILLSENNVVKICDFGLARDVYKDPDYVRKGDARLPLKWMAPEAIFDKIYTTQSDVWSFGVLMWEIFSLGASPYPGLHIDEEFCCRLKEGTRMKAPEYSSSEIYQTMLDCWHGEPSQRPTFTELVERLGDLLQASVQQEGKHYIPINTALLTKADPSNQSPTEETSTRPVSLRDSGTAWNIKIRPESVKTFDEVILENGTNKIHEGGQSDSGIGLSSDDLKTLKRLESLARPRSFMSRAMKRKSKESVLLEGEMDKYPPLVPSLSLEDSSLDSEMECHSPPPDYNYVVRYSTPPV</sequence>
<keyword id="KW-0037">Angiogenesis</keyword>
<keyword id="KW-0067">ATP-binding</keyword>
<keyword id="KW-1003">Cell membrane</keyword>
<keyword id="KW-0217">Developmental protein</keyword>
<keyword id="KW-0221">Differentiation</keyword>
<keyword id="KW-1015">Disulfide bond</keyword>
<keyword id="KW-0325">Glycoprotein</keyword>
<keyword id="KW-0393">Immunoglobulin domain</keyword>
<keyword id="KW-0418">Kinase</keyword>
<keyword id="KW-0472">Membrane</keyword>
<keyword id="KW-0547">Nucleotide-binding</keyword>
<keyword id="KW-0597">Phosphoprotein</keyword>
<keyword id="KW-0675">Receptor</keyword>
<keyword id="KW-1185">Reference proteome</keyword>
<keyword id="KW-0677">Repeat</keyword>
<keyword id="KW-0732">Signal</keyword>
<keyword id="KW-0808">Transferase</keyword>
<keyword id="KW-0812">Transmembrane</keyword>
<keyword id="KW-1133">Transmembrane helix</keyword>
<keyword id="KW-0829">Tyrosine-protein kinase</keyword>
<evidence type="ECO:0000250" key="1"/>
<evidence type="ECO:0000250" key="2">
    <source>
        <dbReference type="UniProtKB" id="P17948"/>
    </source>
</evidence>
<evidence type="ECO:0000255" key="3"/>
<evidence type="ECO:0000255" key="4">
    <source>
        <dbReference type="PROSITE-ProRule" id="PRU00114"/>
    </source>
</evidence>
<evidence type="ECO:0000255" key="5">
    <source>
        <dbReference type="PROSITE-ProRule" id="PRU00159"/>
    </source>
</evidence>
<evidence type="ECO:0000255" key="6">
    <source>
        <dbReference type="PROSITE-ProRule" id="PRU10028"/>
    </source>
</evidence>
<evidence type="ECO:0000256" key="7">
    <source>
        <dbReference type="SAM" id="MobiDB-lite"/>
    </source>
</evidence>
<evidence type="ECO:0000269" key="8">
    <source>
    </source>
</evidence>
<evidence type="ECO:0000269" key="9">
    <source>
    </source>
</evidence>
<evidence type="ECO:0000269" key="10">
    <source>
    </source>
</evidence>
<evidence type="ECO:0000269" key="11">
    <source>
    </source>
</evidence>
<evidence type="ECO:0000269" key="12">
    <source>
    </source>
</evidence>
<evidence type="ECO:0000269" key="13">
    <source>
    </source>
</evidence>
<evidence type="ECO:0000269" key="14">
    <source>
    </source>
</evidence>
<evidence type="ECO:0000269" key="15">
    <source>
    </source>
</evidence>
<evidence type="ECO:0000269" key="16">
    <source>
    </source>
</evidence>
<evidence type="ECO:0000303" key="17">
    <source>
    </source>
</evidence>
<evidence type="ECO:0000305" key="18"/>
<evidence type="ECO:0000312" key="19">
    <source>
        <dbReference type="EMBL" id="AAB41042.1"/>
    </source>
</evidence>
<evidence type="ECO:0000312" key="20">
    <source>
        <dbReference type="EMBL" id="AAL16381.1"/>
    </source>
</evidence>
<evidence type="ECO:0000312" key="21">
    <source>
        <dbReference type="EMBL" id="AAN47136.1"/>
    </source>
</evidence>
<protein>
    <recommendedName>
        <fullName>Vascular endothelial growth factor receptor kdr-like</fullName>
        <ecNumber>2.7.10.1</ecNumber>
    </recommendedName>
    <alternativeName>
        <fullName>Fetal liver kinase 1</fullName>
        <shortName>FLK-1</shortName>
    </alternativeName>
    <alternativeName>
        <fullName>Kinase insert domain receptor-A</fullName>
    </alternativeName>
    <alternativeName>
        <fullName>Kinase insert domain receptor-like</fullName>
    </alternativeName>
    <alternativeName>
        <fullName>Protein-tyrosine kinase receptor flk-1</fullName>
    </alternativeName>
    <alternativeName>
        <fullName>Vascular endothelial growth factor receptor 4</fullName>
        <shortName>VEGFR-4</shortName>
    </alternativeName>
</protein>
<proteinExistence type="evidence at protein level"/>
<name>VGFR4_DANRE</name>
<feature type="signal peptide" evidence="3">
    <location>
        <begin position="1"/>
        <end position="28"/>
    </location>
</feature>
<feature type="chain" id="PRO_0000016775" description="Vascular endothelial growth factor receptor kdr-like">
    <location>
        <begin position="29"/>
        <end position="1302"/>
    </location>
</feature>
<feature type="topological domain" description="Extracellular" evidence="3">
    <location>
        <begin position="29"/>
        <end position="740"/>
    </location>
</feature>
<feature type="transmembrane region" description="Helical" evidence="3">
    <location>
        <begin position="741"/>
        <end position="761"/>
    </location>
</feature>
<feature type="topological domain" description="Cytoplasmic" evidence="3">
    <location>
        <begin position="762"/>
        <end position="1302"/>
    </location>
</feature>
<feature type="domain" description="Ig-like C2-type 1" evidence="18">
    <location>
        <begin position="34"/>
        <end position="115"/>
    </location>
</feature>
<feature type="domain" description="Ig-like C2-type 2" evidence="18">
    <location>
        <begin position="143"/>
        <end position="206"/>
    </location>
</feature>
<feature type="domain" description="Ig-like C2-type 3" evidence="18">
    <location>
        <begin position="222"/>
        <end position="318"/>
    </location>
</feature>
<feature type="domain" description="Ig-like C2-type 4" evidence="18">
    <location>
        <begin position="326"/>
        <end position="412"/>
    </location>
</feature>
<feature type="domain" description="Ig-like C2-type 5" evidence="18">
    <location>
        <begin position="419"/>
        <end position="542"/>
    </location>
</feature>
<feature type="domain" description="Ig-like C2-type 6" evidence="18">
    <location>
        <begin position="545"/>
        <end position="636"/>
    </location>
</feature>
<feature type="domain" description="Ig-like C2-type 7" evidence="18">
    <location>
        <begin position="643"/>
        <end position="728"/>
    </location>
</feature>
<feature type="domain" description="Protein kinase" evidence="5 18">
    <location>
        <begin position="809"/>
        <end position="1139"/>
    </location>
</feature>
<feature type="region of interest" description="Disordered" evidence="7">
    <location>
        <begin position="1159"/>
        <end position="1179"/>
    </location>
</feature>
<feature type="region of interest" description="Disordered" evidence="7">
    <location>
        <begin position="1266"/>
        <end position="1292"/>
    </location>
</feature>
<feature type="compositionally biased region" description="Polar residues" evidence="7">
    <location>
        <begin position="1162"/>
        <end position="1176"/>
    </location>
</feature>
<feature type="active site" description="Proton acceptor" evidence="5 6">
    <location>
        <position position="1003"/>
    </location>
</feature>
<feature type="binding site" evidence="2 5">
    <location>
        <begin position="815"/>
        <end position="823"/>
    </location>
    <ligand>
        <name>ATP</name>
        <dbReference type="ChEBI" id="CHEBI:30616"/>
    </ligand>
</feature>
<feature type="binding site" evidence="2 5">
    <location>
        <position position="843"/>
    </location>
    <ligand>
        <name>ATP</name>
        <dbReference type="ChEBI" id="CHEBI:30616"/>
    </ligand>
</feature>
<feature type="modified residue" description="Phosphotyrosine; by autocatalysis" evidence="1">
    <location>
        <position position="1029"/>
    </location>
</feature>
<feature type="modified residue" description="Phosphotyrosine; by autocatalysis" evidence="1">
    <location>
        <position position="1034"/>
    </location>
</feature>
<feature type="modified residue" description="Phosphotyrosine; by autocatalysis" evidence="1">
    <location>
        <position position="1150"/>
    </location>
</feature>
<feature type="glycosylation site" description="N-linked (GlcNAc...) asparagine" evidence="18">
    <location>
        <position position="69"/>
    </location>
</feature>
<feature type="glycosylation site" description="N-linked (GlcNAc...) asparagine" evidence="18">
    <location>
        <position position="97"/>
    </location>
</feature>
<feature type="glycosylation site" description="N-linked (GlcNAc...) asparagine" evidence="18">
    <location>
        <position position="242"/>
    </location>
</feature>
<feature type="glycosylation site" description="N-linked (GlcNAc...) asparagine" evidence="18">
    <location>
        <position position="265"/>
    </location>
</feature>
<feature type="glycosylation site" description="N-linked (GlcNAc...) asparagine" evidence="18">
    <location>
        <position position="291"/>
    </location>
</feature>
<feature type="glycosylation site" description="N-linked (GlcNAc...) asparagine" evidence="18">
    <location>
        <position position="326"/>
    </location>
</feature>
<feature type="glycosylation site" description="N-linked (GlcNAc...) asparagine" evidence="18">
    <location>
        <position position="370"/>
    </location>
</feature>
<feature type="glycosylation site" description="N-linked (GlcNAc...) asparagine" evidence="18">
    <location>
        <position position="380"/>
    </location>
</feature>
<feature type="glycosylation site" description="N-linked (GlcNAc...) asparagine" evidence="18">
    <location>
        <position position="408"/>
    </location>
</feature>
<feature type="glycosylation site" description="N-linked (GlcNAc...) asparagine" evidence="18">
    <location>
        <position position="453"/>
    </location>
</feature>
<feature type="glycosylation site" description="N-linked (GlcNAc...) asparagine" evidence="18">
    <location>
        <position position="466"/>
    </location>
</feature>
<feature type="glycosylation site" description="N-linked (GlcNAc...) asparagine" evidence="18">
    <location>
        <position position="505"/>
    </location>
</feature>
<feature type="glycosylation site" description="N-linked (GlcNAc...) asparagine" evidence="18">
    <location>
        <position position="517"/>
    </location>
</feature>
<feature type="glycosylation site" description="N-linked (GlcNAc...) asparagine" evidence="18">
    <location>
        <position position="532"/>
    </location>
</feature>
<feature type="glycosylation site" description="N-linked (GlcNAc...) asparagine" evidence="18">
    <location>
        <position position="607"/>
    </location>
</feature>
<feature type="glycosylation site" description="N-linked (GlcNAc...) asparagine" evidence="18">
    <location>
        <position position="611"/>
    </location>
</feature>
<feature type="glycosylation site" description="N-linked (GlcNAc...) asparagine" evidence="18">
    <location>
        <position position="630"/>
    </location>
</feature>
<feature type="glycosylation site" description="N-linked (GlcNAc...) asparagine" evidence="18">
    <location>
        <position position="648"/>
    </location>
</feature>
<feature type="glycosylation site" description="N-linked (GlcNAc...) asparagine" evidence="18">
    <location>
        <position position="655"/>
    </location>
</feature>
<feature type="disulfide bond" evidence="4">
    <location>
        <begin position="55"/>
        <end position="104"/>
    </location>
</feature>
<feature type="disulfide bond" evidence="2 4">
    <location>
        <begin position="150"/>
        <end position="199"/>
    </location>
</feature>
<feature type="disulfide bond" evidence="4">
    <location>
        <begin position="243"/>
        <end position="302"/>
    </location>
</feature>
<feature type="disulfide bond" evidence="4">
    <location>
        <begin position="444"/>
        <end position="524"/>
    </location>
</feature>
<feature type="disulfide bond" evidence="4">
    <location>
        <begin position="565"/>
        <end position="618"/>
    </location>
</feature>
<feature type="disulfide bond" evidence="4">
    <location>
        <begin position="664"/>
        <end position="712"/>
    </location>
</feature>
<feature type="mutagenesis site" description="In y17; abolishes kinase activity and causes specific defects in artery development." evidence="10">
    <original>L</original>
    <variation>R</variation>
    <location>
        <position position="845"/>
    </location>
</feature>
<feature type="sequence conflict" description="In Ref. 3; CAM73177." evidence="18" ref="3">
    <original>A</original>
    <variation>G</variation>
    <location>
        <position position="10"/>
    </location>
</feature>
<feature type="sequence conflict" description="In Ref. 1; AAL16381." evidence="18" ref="1">
    <original>G</original>
    <variation>E</variation>
    <location>
        <position position="49"/>
    </location>
</feature>
<feature type="sequence conflict" description="In Ref. 6; AAF03237." evidence="18" ref="6">
    <original>ILNC</original>
    <variation>HPSTA</variation>
    <location>
        <begin position="240"/>
        <end position="243"/>
    </location>
</feature>
<feature type="sequence conflict" description="In Ref. 6; AAF03237." evidence="18" ref="6">
    <original>R</original>
    <variation>W</variation>
    <location>
        <position position="252"/>
    </location>
</feature>
<feature type="sequence conflict" description="In Ref. 1; AAL16381." evidence="18" ref="1">
    <original>T</original>
    <variation>P</variation>
    <location>
        <position position="267"/>
    </location>
</feature>
<feature type="sequence conflict" description="In Ref. 1; AAL16381." evidence="18" ref="1">
    <location>
        <position position="485"/>
    </location>
</feature>
<feature type="sequence conflict" description="In Ref. 1; AAL16381." evidence="18" ref="1">
    <original>H</original>
    <variation>Y</variation>
    <location>
        <position position="583"/>
    </location>
</feature>
<feature type="sequence conflict" description="In Ref. 1; AAL16381, 3; CAM73177, 5; AAI29159 and 6; AAF03237." evidence="18" ref="1 3 5 6">
    <original>K</original>
    <variation>N</variation>
    <location>
        <position position="622"/>
    </location>
</feature>
<feature type="sequence conflict" description="In Ref. 9; AAB18415." evidence="18" ref="9">
    <original>L</original>
    <variation>R</variation>
    <location>
        <position position="1203"/>
    </location>
</feature>
<dbReference type="EC" id="2.7.10.1"/>
<dbReference type="EMBL" id="AY056466">
    <property type="protein sequence ID" value="AAL16381.1"/>
    <property type="molecule type" value="mRNA"/>
</dbReference>
<dbReference type="EMBL" id="AF487829">
    <property type="protein sequence ID" value="AAN47136.1"/>
    <property type="molecule type" value="mRNA"/>
</dbReference>
<dbReference type="EMBL" id="CU458916">
    <property type="protein sequence ID" value="CAM73177.1"/>
    <property type="molecule type" value="mRNA"/>
</dbReference>
<dbReference type="EMBL" id="AL935131">
    <property type="protein sequence ID" value="CAQ13438.1"/>
    <property type="molecule type" value="Genomic_DNA"/>
</dbReference>
<dbReference type="EMBL" id="BC129158">
    <property type="protein sequence ID" value="AAI29159.1"/>
    <property type="molecule type" value="mRNA"/>
</dbReference>
<dbReference type="EMBL" id="AF180354">
    <property type="protein sequence ID" value="AAF03237.1"/>
    <property type="molecule type" value="mRNA"/>
</dbReference>
<dbReference type="EMBL" id="U89515">
    <property type="protein sequence ID" value="AAB62405.1"/>
    <property type="molecule type" value="mRNA"/>
</dbReference>
<dbReference type="EMBL" id="U82383">
    <property type="protein sequence ID" value="AAB41042.1"/>
    <property type="molecule type" value="mRNA"/>
</dbReference>
<dbReference type="EMBL" id="U75995">
    <property type="protein sequence ID" value="AAB18415.1"/>
    <property type="molecule type" value="mRNA"/>
</dbReference>
<dbReference type="RefSeq" id="NP_571547.1">
    <property type="nucleotide sequence ID" value="NM_131472.1"/>
</dbReference>
<dbReference type="SMR" id="Q8AXB3"/>
<dbReference type="FunCoup" id="Q8AXB3">
    <property type="interactions" value="757"/>
</dbReference>
<dbReference type="IntAct" id="Q8AXB3">
    <property type="interactions" value="15"/>
</dbReference>
<dbReference type="STRING" id="7955.ENSDARP00000134625"/>
<dbReference type="GlyCosmos" id="Q8AXB3">
    <property type="glycosylation" value="19 sites, No reported glycans"/>
</dbReference>
<dbReference type="PaxDb" id="7955-ENSDARP00000007209"/>
<dbReference type="GeneID" id="796537"/>
<dbReference type="KEGG" id="dre:796537"/>
<dbReference type="AGR" id="ZFIN:ZDB-GENE-000705-1"/>
<dbReference type="CTD" id="796537"/>
<dbReference type="ZFIN" id="ZDB-GENE-000705-1">
    <property type="gene designation" value="kdrl"/>
</dbReference>
<dbReference type="eggNOG" id="KOG0200">
    <property type="taxonomic scope" value="Eukaryota"/>
</dbReference>
<dbReference type="InParanoid" id="Q8AXB3"/>
<dbReference type="OrthoDB" id="5979328at2759"/>
<dbReference type="PhylomeDB" id="Q8AXB3"/>
<dbReference type="SignaLink" id="Q8AXB3"/>
<dbReference type="PRO" id="PR:Q8AXB3"/>
<dbReference type="Proteomes" id="UP000000437">
    <property type="component" value="Alternate scaffold 14"/>
</dbReference>
<dbReference type="Proteomes" id="UP000000437">
    <property type="component" value="Chromosome 14"/>
</dbReference>
<dbReference type="GO" id="GO:0005886">
    <property type="term" value="C:plasma membrane"/>
    <property type="evidence" value="ECO:0000318"/>
    <property type="project" value="GO_Central"/>
</dbReference>
<dbReference type="GO" id="GO:0043235">
    <property type="term" value="C:receptor complex"/>
    <property type="evidence" value="ECO:0000318"/>
    <property type="project" value="GO_Central"/>
</dbReference>
<dbReference type="GO" id="GO:0005524">
    <property type="term" value="F:ATP binding"/>
    <property type="evidence" value="ECO:0007669"/>
    <property type="project" value="UniProtKB-KW"/>
</dbReference>
<dbReference type="GO" id="GO:0019838">
    <property type="term" value="F:growth factor binding"/>
    <property type="evidence" value="ECO:0000318"/>
    <property type="project" value="GO_Central"/>
</dbReference>
<dbReference type="GO" id="GO:0004713">
    <property type="term" value="F:protein tyrosine kinase activity"/>
    <property type="evidence" value="ECO:0000314"/>
    <property type="project" value="UniProtKB"/>
</dbReference>
<dbReference type="GO" id="GO:0005021">
    <property type="term" value="F:vascular endothelial growth factor receptor activity"/>
    <property type="evidence" value="ECO:0000318"/>
    <property type="project" value="GO_Central"/>
</dbReference>
<dbReference type="GO" id="GO:0001525">
    <property type="term" value="P:angiogenesis"/>
    <property type="evidence" value="ECO:0000315"/>
    <property type="project" value="UniProtKB"/>
</dbReference>
<dbReference type="GO" id="GO:0048844">
    <property type="term" value="P:artery morphogenesis"/>
    <property type="evidence" value="ECO:0000315"/>
    <property type="project" value="ZFIN"/>
</dbReference>
<dbReference type="GO" id="GO:0001568">
    <property type="term" value="P:blood vessel development"/>
    <property type="evidence" value="ECO:0000315"/>
    <property type="project" value="ZFIN"/>
</dbReference>
<dbReference type="GO" id="GO:0016477">
    <property type="term" value="P:cell migration"/>
    <property type="evidence" value="ECO:0000318"/>
    <property type="project" value="GO_Central"/>
</dbReference>
<dbReference type="GO" id="GO:0007169">
    <property type="term" value="P:cell surface receptor protein tyrosine kinase signaling pathway"/>
    <property type="evidence" value="ECO:0000318"/>
    <property type="project" value="GO_Central"/>
</dbReference>
<dbReference type="GO" id="GO:0035050">
    <property type="term" value="P:embryonic heart tube development"/>
    <property type="evidence" value="ECO:0000315"/>
    <property type="project" value="ZFIN"/>
</dbReference>
<dbReference type="GO" id="GO:0045446">
    <property type="term" value="P:endothelial cell differentiation"/>
    <property type="evidence" value="ECO:0000318"/>
    <property type="project" value="GO_Central"/>
</dbReference>
<dbReference type="GO" id="GO:0001946">
    <property type="term" value="P:lymphangiogenesis"/>
    <property type="evidence" value="ECO:0000315"/>
    <property type="project" value="ZFIN"/>
</dbReference>
<dbReference type="GO" id="GO:0018108">
    <property type="term" value="P:peptidyl-tyrosine phosphorylation"/>
    <property type="evidence" value="ECO:0000314"/>
    <property type="project" value="UniProtKB"/>
</dbReference>
<dbReference type="GO" id="GO:0045766">
    <property type="term" value="P:positive regulation of angiogenesis"/>
    <property type="evidence" value="ECO:0000318"/>
    <property type="project" value="GO_Central"/>
</dbReference>
<dbReference type="GO" id="GO:0030335">
    <property type="term" value="P:positive regulation of cell migration"/>
    <property type="evidence" value="ECO:0000318"/>
    <property type="project" value="GO_Central"/>
</dbReference>
<dbReference type="GO" id="GO:0008284">
    <property type="term" value="P:positive regulation of cell population proliferation"/>
    <property type="evidence" value="ECO:0000318"/>
    <property type="project" value="GO_Central"/>
</dbReference>
<dbReference type="GO" id="GO:0043408">
    <property type="term" value="P:regulation of MAPK cascade"/>
    <property type="evidence" value="ECO:0000318"/>
    <property type="project" value="GO_Central"/>
</dbReference>
<dbReference type="GO" id="GO:0002040">
    <property type="term" value="P:sprouting angiogenesis"/>
    <property type="evidence" value="ECO:0000316"/>
    <property type="project" value="ZFIN"/>
</dbReference>
<dbReference type="GO" id="GO:0030878">
    <property type="term" value="P:thyroid gland development"/>
    <property type="evidence" value="ECO:0000315"/>
    <property type="project" value="ZFIN"/>
</dbReference>
<dbReference type="FunFam" id="1.10.510.10:FF:002412">
    <property type="match status" value="1"/>
</dbReference>
<dbReference type="FunFam" id="2.60.40.10:FF:003763">
    <property type="match status" value="1"/>
</dbReference>
<dbReference type="FunFam" id="2.60.40.10:FF:001031">
    <property type="entry name" value="Vascular endothelial growth factor receptor 1"/>
    <property type="match status" value="1"/>
</dbReference>
<dbReference type="FunFam" id="3.30.200.20:FF:000041">
    <property type="entry name" value="Vascular endothelial growth factor receptor 2"/>
    <property type="match status" value="1"/>
</dbReference>
<dbReference type="FunFam" id="2.60.40.10:FF:000247">
    <property type="entry name" value="Vascular endothelial growth factor receptor 3"/>
    <property type="match status" value="1"/>
</dbReference>
<dbReference type="Gene3D" id="2.60.40.10">
    <property type="entry name" value="Immunoglobulins"/>
    <property type="match status" value="6"/>
</dbReference>
<dbReference type="Gene3D" id="3.30.200.20">
    <property type="entry name" value="Phosphorylase Kinase, domain 1"/>
    <property type="match status" value="1"/>
</dbReference>
<dbReference type="Gene3D" id="1.10.510.10">
    <property type="entry name" value="Transferase(Phosphotransferase) domain 1"/>
    <property type="match status" value="1"/>
</dbReference>
<dbReference type="InterPro" id="IPR007110">
    <property type="entry name" value="Ig-like_dom"/>
</dbReference>
<dbReference type="InterPro" id="IPR036179">
    <property type="entry name" value="Ig-like_dom_sf"/>
</dbReference>
<dbReference type="InterPro" id="IPR013783">
    <property type="entry name" value="Ig-like_fold"/>
</dbReference>
<dbReference type="InterPro" id="IPR013098">
    <property type="entry name" value="Ig_I-set"/>
</dbReference>
<dbReference type="InterPro" id="IPR003599">
    <property type="entry name" value="Ig_sub"/>
</dbReference>
<dbReference type="InterPro" id="IPR003598">
    <property type="entry name" value="Ig_sub2"/>
</dbReference>
<dbReference type="InterPro" id="IPR013151">
    <property type="entry name" value="Immunoglobulin_dom"/>
</dbReference>
<dbReference type="InterPro" id="IPR011009">
    <property type="entry name" value="Kinase-like_dom_sf"/>
</dbReference>
<dbReference type="InterPro" id="IPR000719">
    <property type="entry name" value="Prot_kinase_dom"/>
</dbReference>
<dbReference type="InterPro" id="IPR017441">
    <property type="entry name" value="Protein_kinase_ATP_BS"/>
</dbReference>
<dbReference type="InterPro" id="IPR050122">
    <property type="entry name" value="RTK"/>
</dbReference>
<dbReference type="InterPro" id="IPR001245">
    <property type="entry name" value="Ser-Thr/Tyr_kinase_cat_dom"/>
</dbReference>
<dbReference type="InterPro" id="IPR008266">
    <property type="entry name" value="Tyr_kinase_AS"/>
</dbReference>
<dbReference type="InterPro" id="IPR020635">
    <property type="entry name" value="Tyr_kinase_cat_dom"/>
</dbReference>
<dbReference type="InterPro" id="IPR001824">
    <property type="entry name" value="Tyr_kinase_rcpt_3_CS"/>
</dbReference>
<dbReference type="InterPro" id="IPR041348">
    <property type="entry name" value="VEGFR-2_TMD"/>
</dbReference>
<dbReference type="InterPro" id="IPR055229">
    <property type="entry name" value="VEGFR1-3_5th"/>
</dbReference>
<dbReference type="PANTHER" id="PTHR24416:SF552">
    <property type="entry name" value="RECEPTOR PROTEIN-TYROSINE KINASE"/>
    <property type="match status" value="1"/>
</dbReference>
<dbReference type="PANTHER" id="PTHR24416">
    <property type="entry name" value="TYROSINE-PROTEIN KINASE RECEPTOR"/>
    <property type="match status" value="1"/>
</dbReference>
<dbReference type="Pfam" id="PF07679">
    <property type="entry name" value="I-set"/>
    <property type="match status" value="1"/>
</dbReference>
<dbReference type="Pfam" id="PF00047">
    <property type="entry name" value="ig"/>
    <property type="match status" value="1"/>
</dbReference>
<dbReference type="Pfam" id="PF13927">
    <property type="entry name" value="Ig_3"/>
    <property type="match status" value="1"/>
</dbReference>
<dbReference type="Pfam" id="PF22971">
    <property type="entry name" value="Ig_VEGFR-1-like_5th"/>
    <property type="match status" value="1"/>
</dbReference>
<dbReference type="Pfam" id="PF07714">
    <property type="entry name" value="PK_Tyr_Ser-Thr"/>
    <property type="match status" value="1"/>
</dbReference>
<dbReference type="Pfam" id="PF21339">
    <property type="entry name" value="VEGFR-1-like_Ig-like"/>
    <property type="match status" value="1"/>
</dbReference>
<dbReference type="Pfam" id="PF17988">
    <property type="entry name" value="VEGFR-2_TMD"/>
    <property type="match status" value="1"/>
</dbReference>
<dbReference type="PIRSF" id="PIRSF000615">
    <property type="entry name" value="TyrPK_CSF1-R"/>
    <property type="match status" value="1"/>
</dbReference>
<dbReference type="PRINTS" id="PR01832">
    <property type="entry name" value="VEGFRECEPTOR"/>
</dbReference>
<dbReference type="SMART" id="SM00409">
    <property type="entry name" value="IG"/>
    <property type="match status" value="6"/>
</dbReference>
<dbReference type="SMART" id="SM00408">
    <property type="entry name" value="IGc2"/>
    <property type="match status" value="6"/>
</dbReference>
<dbReference type="SMART" id="SM00219">
    <property type="entry name" value="TyrKc"/>
    <property type="match status" value="1"/>
</dbReference>
<dbReference type="SUPFAM" id="SSF48726">
    <property type="entry name" value="Immunoglobulin"/>
    <property type="match status" value="6"/>
</dbReference>
<dbReference type="SUPFAM" id="SSF56112">
    <property type="entry name" value="Protein kinase-like (PK-like)"/>
    <property type="match status" value="1"/>
</dbReference>
<dbReference type="PROSITE" id="PS50835">
    <property type="entry name" value="IG_LIKE"/>
    <property type="match status" value="6"/>
</dbReference>
<dbReference type="PROSITE" id="PS00107">
    <property type="entry name" value="PROTEIN_KINASE_ATP"/>
    <property type="match status" value="1"/>
</dbReference>
<dbReference type="PROSITE" id="PS50011">
    <property type="entry name" value="PROTEIN_KINASE_DOM"/>
    <property type="match status" value="1"/>
</dbReference>
<dbReference type="PROSITE" id="PS00109">
    <property type="entry name" value="PROTEIN_KINASE_TYR"/>
    <property type="match status" value="1"/>
</dbReference>
<dbReference type="PROSITE" id="PS00240">
    <property type="entry name" value="RECEPTOR_TYR_KIN_III"/>
    <property type="match status" value="1"/>
</dbReference>
<organism evidence="21">
    <name type="scientific">Danio rerio</name>
    <name type="common">Zebrafish</name>
    <name type="synonym">Brachydanio rerio</name>
    <dbReference type="NCBI Taxonomy" id="7955"/>
    <lineage>
        <taxon>Eukaryota</taxon>
        <taxon>Metazoa</taxon>
        <taxon>Chordata</taxon>
        <taxon>Craniata</taxon>
        <taxon>Vertebrata</taxon>
        <taxon>Euteleostomi</taxon>
        <taxon>Actinopterygii</taxon>
        <taxon>Neopterygii</taxon>
        <taxon>Teleostei</taxon>
        <taxon>Ostariophysi</taxon>
        <taxon>Cypriniformes</taxon>
        <taxon>Danionidae</taxon>
        <taxon>Danioninae</taxon>
        <taxon>Danio</taxon>
    </lineage>
</organism>
<accession>Q8AXB3</accession>
<accession>A1L1P1</accession>
<accession>B0R127</accession>
<accession>O42377</accession>
<accession>P79743</accession>
<accession>Q8UUW9</accession>
<accession>Q98891</accession>
<accession>Q9PTL0</accession>